<organism>
    <name type="scientific">Bat coronavirus HKU5</name>
    <name type="common">BtCoV</name>
    <name type="synonym">BtCoV/HKU5/2004</name>
    <dbReference type="NCBI Taxonomy" id="694008"/>
    <lineage>
        <taxon>Viruses</taxon>
        <taxon>Riboviria</taxon>
        <taxon>Orthornavirae</taxon>
        <taxon>Pisuviricota</taxon>
        <taxon>Pisoniviricetes</taxon>
        <taxon>Nidovirales</taxon>
        <taxon>Cornidovirineae</taxon>
        <taxon>Coronaviridae</taxon>
        <taxon>Orthocoronavirinae</taxon>
        <taxon>Betacoronavirus</taxon>
        <taxon>Merbecovirus</taxon>
    </lineage>
</organism>
<organismHost>
    <name type="scientific">Pipistrellus abramus</name>
    <name type="common">Japanese pipistrelle</name>
    <name type="synonym">Pipistrellus javanicus abramus</name>
    <dbReference type="NCBI Taxonomy" id="105295"/>
</organismHost>
<evidence type="ECO:0000255" key="1">
    <source>
        <dbReference type="HAMAP-Rule" id="MF_04202"/>
    </source>
</evidence>
<evidence type="ECO:0000255" key="2">
    <source>
        <dbReference type="PROSITE-ProRule" id="PRU01275"/>
    </source>
</evidence>
<evidence type="ECO:0007829" key="3">
    <source>
        <dbReference type="PDB" id="7Y9B"/>
    </source>
</evidence>
<gene>
    <name evidence="1" type="primary">M</name>
    <name type="ORF">5</name>
</gene>
<feature type="chain" id="PRO_0000290332" description="Membrane protein">
    <location>
        <begin position="1"/>
        <end position="220"/>
    </location>
</feature>
<feature type="topological domain" description="Virion surface" evidence="1">
    <location>
        <begin position="2"/>
        <end position="19"/>
    </location>
</feature>
<feature type="transmembrane region" description="Helical" evidence="1">
    <location>
        <begin position="20"/>
        <end position="40"/>
    </location>
</feature>
<feature type="topological domain" description="Intravirion" evidence="1">
    <location>
        <begin position="41"/>
        <end position="50"/>
    </location>
</feature>
<feature type="transmembrane region" description="Helical" evidence="1">
    <location>
        <begin position="51"/>
        <end position="71"/>
    </location>
</feature>
<feature type="topological domain" description="Virion surface" evidence="1">
    <location>
        <begin position="72"/>
        <end position="79"/>
    </location>
</feature>
<feature type="transmembrane region" description="Helical" evidence="1">
    <location>
        <begin position="80"/>
        <end position="100"/>
    </location>
</feature>
<feature type="topological domain" description="Intravirion" evidence="1">
    <location>
        <begin position="101"/>
        <end position="220"/>
    </location>
</feature>
<feature type="helix" evidence="3">
    <location>
        <begin position="14"/>
        <end position="37"/>
    </location>
</feature>
<feature type="turn" evidence="3">
    <location>
        <begin position="40"/>
        <end position="42"/>
    </location>
</feature>
<feature type="helix" evidence="3">
    <location>
        <begin position="44"/>
        <end position="70"/>
    </location>
</feature>
<feature type="helix" evidence="3">
    <location>
        <begin position="75"/>
        <end position="106"/>
    </location>
</feature>
<feature type="helix" evidence="3">
    <location>
        <begin position="109"/>
        <end position="112"/>
    </location>
</feature>
<feature type="strand" evidence="3">
    <location>
        <begin position="118"/>
        <end position="124"/>
    </location>
</feature>
<feature type="strand" evidence="3">
    <location>
        <begin position="127"/>
        <end position="135"/>
    </location>
</feature>
<feature type="strand" evidence="3">
    <location>
        <begin position="138"/>
        <end position="145"/>
    </location>
</feature>
<feature type="strand" evidence="3">
    <location>
        <begin position="148"/>
        <end position="151"/>
    </location>
</feature>
<feature type="strand" evidence="3">
    <location>
        <begin position="154"/>
        <end position="158"/>
    </location>
</feature>
<feature type="strand" evidence="3">
    <location>
        <begin position="166"/>
        <end position="172"/>
    </location>
</feature>
<feature type="strand" evidence="3">
    <location>
        <begin position="175"/>
        <end position="190"/>
    </location>
</feature>
<feature type="strand" evidence="3">
    <location>
        <begin position="192"/>
        <end position="198"/>
    </location>
</feature>
<accession>A3EXD6</accession>
<comment type="function">
    <text evidence="1 2">Component of the viral envelope that plays a central role in virus morphogenesis and assembly via its interactions with other viral proteins.</text>
</comment>
<comment type="subunit">
    <text evidence="1 2">Homomultimer. Interacts with envelope E protein in the budding compartment of the host cell, which is located between endoplasmic reticulum and the Golgi complex. Forms a complex with HE and S proteins. Interacts with nucleocapsid N protein. This interaction probably participates in RNA packaging into the virus.</text>
</comment>
<comment type="subcellular location">
    <subcellularLocation>
        <location evidence="1">Virion membrane</location>
        <topology evidence="1">Multi-pass membrane protein</topology>
    </subcellularLocation>
    <subcellularLocation>
        <location evidence="1">Host Golgi apparatus membrane</location>
        <topology evidence="1">Multi-pass membrane protein</topology>
    </subcellularLocation>
    <text evidence="1">Largely embedded in the lipid bilayer.</text>
</comment>
<comment type="similarity">
    <text evidence="1">Belongs to the betacoronaviruses M protein family.</text>
</comment>
<dbReference type="EMBL" id="EF065509">
    <property type="protein sequence ID" value="ABN10881.1"/>
    <property type="molecule type" value="Genomic_RNA"/>
</dbReference>
<dbReference type="RefSeq" id="YP_001039968.1">
    <property type="nucleotide sequence ID" value="NC_009020.1"/>
</dbReference>
<dbReference type="PDB" id="7Y96">
    <property type="method" value="X-ray"/>
    <property type="resolution" value="3.42 A"/>
    <property type="chains" value="A/B=116-203"/>
</dbReference>
<dbReference type="PDB" id="7Y9B">
    <property type="method" value="X-ray"/>
    <property type="resolution" value="3.21 A"/>
    <property type="chains" value="A/B/C/D=1-220"/>
</dbReference>
<dbReference type="PDBsum" id="7Y96"/>
<dbReference type="PDBsum" id="7Y9B"/>
<dbReference type="SMR" id="A3EXD6"/>
<dbReference type="GeneID" id="4836001"/>
<dbReference type="KEGG" id="vg:4836001"/>
<dbReference type="OrthoDB" id="8130at10239"/>
<dbReference type="Proteomes" id="UP000007451">
    <property type="component" value="Segment"/>
</dbReference>
<dbReference type="GO" id="GO:0044178">
    <property type="term" value="C:host cell Golgi membrane"/>
    <property type="evidence" value="ECO:0007669"/>
    <property type="project" value="UniProtKB-SubCell"/>
</dbReference>
<dbReference type="GO" id="GO:0016020">
    <property type="term" value="C:membrane"/>
    <property type="evidence" value="ECO:0007669"/>
    <property type="project" value="UniProtKB-UniRule"/>
</dbReference>
<dbReference type="GO" id="GO:0019031">
    <property type="term" value="C:viral envelope"/>
    <property type="evidence" value="ECO:0007669"/>
    <property type="project" value="UniProtKB-UniRule"/>
</dbReference>
<dbReference type="GO" id="GO:0055036">
    <property type="term" value="C:virion membrane"/>
    <property type="evidence" value="ECO:0007669"/>
    <property type="project" value="UniProtKB-SubCell"/>
</dbReference>
<dbReference type="GO" id="GO:0039660">
    <property type="term" value="F:structural constituent of virion"/>
    <property type="evidence" value="ECO:0007669"/>
    <property type="project" value="UniProtKB-UniRule"/>
</dbReference>
<dbReference type="CDD" id="cd21567">
    <property type="entry name" value="MERS-like-CoV_M"/>
    <property type="match status" value="1"/>
</dbReference>
<dbReference type="HAMAP" id="MF_04202">
    <property type="entry name" value="BETA_CORONA_M"/>
    <property type="match status" value="1"/>
</dbReference>
<dbReference type="InterPro" id="IPR002574">
    <property type="entry name" value="M_CoV"/>
</dbReference>
<dbReference type="InterPro" id="IPR044363">
    <property type="entry name" value="M_MERS-like-CoV"/>
</dbReference>
<dbReference type="Pfam" id="PF01635">
    <property type="entry name" value="CoV_M"/>
    <property type="match status" value="1"/>
</dbReference>
<dbReference type="PROSITE" id="PS51927">
    <property type="entry name" value="COV_M"/>
    <property type="match status" value="1"/>
</dbReference>
<keyword id="KW-0002">3D-structure</keyword>
<keyword id="KW-0325">Glycoprotein</keyword>
<keyword id="KW-1040">Host Golgi apparatus</keyword>
<keyword id="KW-1043">Host membrane</keyword>
<keyword id="KW-0945">Host-virus interaction</keyword>
<keyword id="KW-0472">Membrane</keyword>
<keyword id="KW-1185">Reference proteome</keyword>
<keyword id="KW-0812">Transmembrane</keyword>
<keyword id="KW-1133">Transmembrane helix</keyword>
<keyword id="KW-0261">Viral envelope protein</keyword>
<keyword id="KW-0899">Viral immunoevasion</keyword>
<keyword id="KW-0468">Viral matrix protein</keyword>
<keyword id="KW-0946">Virion</keyword>
<sequence length="220" mass="24710">MASSNVTLSNDEVLRLVKDWNFTWSVVFLLITIVLQYGYPSRSMFVYVIKMFVLWLLWPASMALSIFCAVYPIDLASQIISGILAATSCAMWISYFVQSIRLFMRTGSWWSFNPESNCLLNVPIGGTTVVRPLVEDSTSVTAVVTDGYLKMAGMHFGACDFQRLPSEVTVAKPNVLIALKMIKRQAYGTNSGVAIYHRYKAGNYRRPPIIQDQELALLRA</sequence>
<proteinExistence type="evidence at protein level"/>
<reference key="1">
    <citation type="journal article" date="2007" name="J. Virol.">
        <title>Comparative analysis of twelve genomes of three novel group 2c and group 2d coronaviruses reveals unique group and subgroup features.</title>
        <authorList>
            <person name="Woo P.C.Y."/>
            <person name="Wang M."/>
            <person name="Lau S.K.P."/>
            <person name="Xu H.F."/>
            <person name="Poon R.W.S."/>
            <person name="Guo R."/>
            <person name="Wong B.H.L."/>
            <person name="Gao K."/>
            <person name="Tsoi H.-W."/>
            <person name="Huang Y."/>
            <person name="Li K.S.M."/>
            <person name="Lam C.S.F."/>
            <person name="Chan K.-H."/>
            <person name="Zheng B.-J."/>
            <person name="Yuen K.-Y."/>
        </authorList>
    </citation>
    <scope>NUCLEOTIDE SEQUENCE [GENOMIC RNA]</scope>
    <source>
        <strain>Isolate HKU5-1</strain>
    </source>
</reference>
<name>VME1_BCHK5</name>
<protein>
    <recommendedName>
        <fullName evidence="1">Membrane protein</fullName>
        <shortName evidence="1">M protein</shortName>
    </recommendedName>
    <alternativeName>
        <fullName evidence="1">E1 glycoprotein</fullName>
    </alternativeName>
    <alternativeName>
        <fullName evidence="1">Matrix glycoprotein</fullName>
    </alternativeName>
    <alternativeName>
        <fullName evidence="1">Membrane glycoprotein</fullName>
    </alternativeName>
</protein>